<feature type="signal peptide" evidence="1">
    <location>
        <begin position="1"/>
        <end position="34"/>
    </location>
</feature>
<feature type="chain" id="PRO_0000116621" description="Meiotically up-regulated gene 106 protein">
    <location>
        <begin position="35"/>
        <end position="115"/>
    </location>
</feature>
<feature type="transmembrane region" description="Helical" evidence="1">
    <location>
        <begin position="41"/>
        <end position="60"/>
    </location>
</feature>
<feature type="transmembrane region" description="Helical" evidence="1">
    <location>
        <begin position="81"/>
        <end position="103"/>
    </location>
</feature>
<protein>
    <recommendedName>
        <fullName>Meiotically up-regulated gene 106 protein</fullName>
    </recommendedName>
</protein>
<proteinExistence type="evidence at protein level"/>
<sequence>MSIKVEWIKFTRLKKCATLLVQLSLLRYRYMVLAYNHKFDCIVVTIYCGCLFWFSNGALFTEGKARDRGRWAKATMKKNYGVKLKIFLFTILLAFETNTFTPYTSTFSHFARGCL</sequence>
<keyword id="KW-0472">Membrane</keyword>
<keyword id="KW-1185">Reference proteome</keyword>
<keyword id="KW-0732">Signal</keyword>
<keyword id="KW-0812">Transmembrane</keyword>
<keyword id="KW-1133">Transmembrane helix</keyword>
<evidence type="ECO:0000255" key="1"/>
<evidence type="ECO:0000269" key="2">
    <source>
    </source>
</evidence>
<evidence type="ECO:0000305" key="3"/>
<organism>
    <name type="scientific">Schizosaccharomyces pombe (strain 972 / ATCC 24843)</name>
    <name type="common">Fission yeast</name>
    <dbReference type="NCBI Taxonomy" id="284812"/>
    <lineage>
        <taxon>Eukaryota</taxon>
        <taxon>Fungi</taxon>
        <taxon>Dikarya</taxon>
        <taxon>Ascomycota</taxon>
        <taxon>Taphrinomycotina</taxon>
        <taxon>Schizosaccharomycetes</taxon>
        <taxon>Schizosaccharomycetales</taxon>
        <taxon>Schizosaccharomycetaceae</taxon>
        <taxon>Schizosaccharomyces</taxon>
    </lineage>
</organism>
<name>MU106_SCHPO</name>
<reference key="1">
    <citation type="journal article" date="2002" name="Nature">
        <title>The genome sequence of Schizosaccharomyces pombe.</title>
        <authorList>
            <person name="Wood V."/>
            <person name="Gwilliam R."/>
            <person name="Rajandream M.A."/>
            <person name="Lyne M.H."/>
            <person name="Lyne R."/>
            <person name="Stewart A."/>
            <person name="Sgouros J.G."/>
            <person name="Peat N."/>
            <person name="Hayles J."/>
            <person name="Baker S.G."/>
            <person name="Basham D."/>
            <person name="Bowman S."/>
            <person name="Brooks K."/>
            <person name="Brown D."/>
            <person name="Brown S."/>
            <person name="Chillingworth T."/>
            <person name="Churcher C.M."/>
            <person name="Collins M."/>
            <person name="Connor R."/>
            <person name="Cronin A."/>
            <person name="Davis P."/>
            <person name="Feltwell T."/>
            <person name="Fraser A."/>
            <person name="Gentles S."/>
            <person name="Goble A."/>
            <person name="Hamlin N."/>
            <person name="Harris D.E."/>
            <person name="Hidalgo J."/>
            <person name="Hodgson G."/>
            <person name="Holroyd S."/>
            <person name="Hornsby T."/>
            <person name="Howarth S."/>
            <person name="Huckle E.J."/>
            <person name="Hunt S."/>
            <person name="Jagels K."/>
            <person name="James K.D."/>
            <person name="Jones L."/>
            <person name="Jones M."/>
            <person name="Leather S."/>
            <person name="McDonald S."/>
            <person name="McLean J."/>
            <person name="Mooney P."/>
            <person name="Moule S."/>
            <person name="Mungall K.L."/>
            <person name="Murphy L.D."/>
            <person name="Niblett D."/>
            <person name="Odell C."/>
            <person name="Oliver K."/>
            <person name="O'Neil S."/>
            <person name="Pearson D."/>
            <person name="Quail M.A."/>
            <person name="Rabbinowitsch E."/>
            <person name="Rutherford K.M."/>
            <person name="Rutter S."/>
            <person name="Saunders D."/>
            <person name="Seeger K."/>
            <person name="Sharp S."/>
            <person name="Skelton J."/>
            <person name="Simmonds M.N."/>
            <person name="Squares R."/>
            <person name="Squares S."/>
            <person name="Stevens K."/>
            <person name="Taylor K."/>
            <person name="Taylor R.G."/>
            <person name="Tivey A."/>
            <person name="Walsh S.V."/>
            <person name="Warren T."/>
            <person name="Whitehead S."/>
            <person name="Woodward J.R."/>
            <person name="Volckaert G."/>
            <person name="Aert R."/>
            <person name="Robben J."/>
            <person name="Grymonprez B."/>
            <person name="Weltjens I."/>
            <person name="Vanstreels E."/>
            <person name="Rieger M."/>
            <person name="Schaefer M."/>
            <person name="Mueller-Auer S."/>
            <person name="Gabel C."/>
            <person name="Fuchs M."/>
            <person name="Duesterhoeft A."/>
            <person name="Fritzc C."/>
            <person name="Holzer E."/>
            <person name="Moestl D."/>
            <person name="Hilbert H."/>
            <person name="Borzym K."/>
            <person name="Langer I."/>
            <person name="Beck A."/>
            <person name="Lehrach H."/>
            <person name="Reinhardt R."/>
            <person name="Pohl T.M."/>
            <person name="Eger P."/>
            <person name="Zimmermann W."/>
            <person name="Wedler H."/>
            <person name="Wambutt R."/>
            <person name="Purnelle B."/>
            <person name="Goffeau A."/>
            <person name="Cadieu E."/>
            <person name="Dreano S."/>
            <person name="Gloux S."/>
            <person name="Lelaure V."/>
            <person name="Mottier S."/>
            <person name="Galibert F."/>
            <person name="Aves S.J."/>
            <person name="Xiang Z."/>
            <person name="Hunt C."/>
            <person name="Moore K."/>
            <person name="Hurst S.M."/>
            <person name="Lucas M."/>
            <person name="Rochet M."/>
            <person name="Gaillardin C."/>
            <person name="Tallada V.A."/>
            <person name="Garzon A."/>
            <person name="Thode G."/>
            <person name="Daga R.R."/>
            <person name="Cruzado L."/>
            <person name="Jimenez J."/>
            <person name="Sanchez M."/>
            <person name="del Rey F."/>
            <person name="Benito J."/>
            <person name="Dominguez A."/>
            <person name="Revuelta J.L."/>
            <person name="Moreno S."/>
            <person name="Armstrong J."/>
            <person name="Forsburg S.L."/>
            <person name="Cerutti L."/>
            <person name="Lowe T."/>
            <person name="McCombie W.R."/>
            <person name="Paulsen I."/>
            <person name="Potashkin J."/>
            <person name="Shpakovski G.V."/>
            <person name="Ussery D."/>
            <person name="Barrell B.G."/>
            <person name="Nurse P."/>
        </authorList>
    </citation>
    <scope>NUCLEOTIDE SEQUENCE [LARGE SCALE GENOMIC DNA]</scope>
    <source>
        <strain>972 / ATCC 24843</strain>
    </source>
</reference>
<reference key="2">
    <citation type="journal article" date="2005" name="Curr. Biol.">
        <title>A large-scale screen in S. pombe identifies seven novel genes required for critical meiotic events.</title>
        <authorList>
            <person name="Martin-Castellanos C."/>
            <person name="Blanco M."/>
            <person name="Rozalen A.E."/>
            <person name="Perez-Hidalgo L."/>
            <person name="Garcia A.I."/>
            <person name="Conde F."/>
            <person name="Mata J."/>
            <person name="Ellermeier C."/>
            <person name="Davis L."/>
            <person name="San-Segundo P."/>
            <person name="Smith G.R."/>
            <person name="Moreno S."/>
        </authorList>
    </citation>
    <scope>FUNCTION IN MEIOSIS</scope>
</reference>
<gene>
    <name type="primary">mug106</name>
    <name type="ORF">SPAC26F1.05</name>
</gene>
<dbReference type="EMBL" id="CU329670">
    <property type="protein sequence ID" value="CAA97362.1"/>
    <property type="molecule type" value="Genomic_DNA"/>
</dbReference>
<dbReference type="PIR" id="T38415">
    <property type="entry name" value="T38415"/>
</dbReference>
<dbReference type="RefSeq" id="NP_594890.1">
    <property type="nucleotide sequence ID" value="NM_001020319.2"/>
</dbReference>
<dbReference type="STRING" id="284812.Q10493"/>
<dbReference type="iPTMnet" id="Q10493"/>
<dbReference type="PaxDb" id="4896-SPAC26F1.05.1"/>
<dbReference type="EnsemblFungi" id="SPAC26F1.05.1">
    <property type="protein sequence ID" value="SPAC26F1.05.1:pep"/>
    <property type="gene ID" value="SPAC26F1.05"/>
</dbReference>
<dbReference type="GeneID" id="2542092"/>
<dbReference type="KEGG" id="spo:2542092"/>
<dbReference type="PomBase" id="SPAC26F1.05">
    <property type="gene designation" value="mug106"/>
</dbReference>
<dbReference type="VEuPathDB" id="FungiDB:SPAC26F1.05"/>
<dbReference type="HOGENOM" id="CLU_2110389_0_0_1"/>
<dbReference type="InParanoid" id="Q10493"/>
<dbReference type="PRO" id="PR:Q10493"/>
<dbReference type="Proteomes" id="UP000002485">
    <property type="component" value="Chromosome I"/>
</dbReference>
<dbReference type="GO" id="GO:0016020">
    <property type="term" value="C:membrane"/>
    <property type="evidence" value="ECO:0007669"/>
    <property type="project" value="UniProtKB-SubCell"/>
</dbReference>
<comment type="function">
    <text evidence="2">Has a role in meiosis.</text>
</comment>
<comment type="subcellular location">
    <subcellularLocation>
        <location evidence="3">Membrane</location>
        <topology evidence="3">Multi-pass membrane protein</topology>
    </subcellularLocation>
</comment>
<accession>Q10493</accession>